<organism>
    <name type="scientific">Serratia proteamaculans (strain 568)</name>
    <dbReference type="NCBI Taxonomy" id="399741"/>
    <lineage>
        <taxon>Bacteria</taxon>
        <taxon>Pseudomonadati</taxon>
        <taxon>Pseudomonadota</taxon>
        <taxon>Gammaproteobacteria</taxon>
        <taxon>Enterobacterales</taxon>
        <taxon>Yersiniaceae</taxon>
        <taxon>Serratia</taxon>
    </lineage>
</organism>
<dbReference type="EC" id="6.1.1.18" evidence="1"/>
<dbReference type="EMBL" id="CP000826">
    <property type="protein sequence ID" value="ABV40333.1"/>
    <property type="molecule type" value="Genomic_DNA"/>
</dbReference>
<dbReference type="SMR" id="A8GB43"/>
<dbReference type="STRING" id="399741.Spro_1229"/>
<dbReference type="KEGG" id="spe:Spro_1229"/>
<dbReference type="eggNOG" id="COG0008">
    <property type="taxonomic scope" value="Bacteria"/>
</dbReference>
<dbReference type="HOGENOM" id="CLU_001882_2_3_6"/>
<dbReference type="OrthoDB" id="9801560at2"/>
<dbReference type="GO" id="GO:0005829">
    <property type="term" value="C:cytosol"/>
    <property type="evidence" value="ECO:0007669"/>
    <property type="project" value="TreeGrafter"/>
</dbReference>
<dbReference type="GO" id="GO:0005524">
    <property type="term" value="F:ATP binding"/>
    <property type="evidence" value="ECO:0007669"/>
    <property type="project" value="UniProtKB-UniRule"/>
</dbReference>
<dbReference type="GO" id="GO:0004819">
    <property type="term" value="F:glutamine-tRNA ligase activity"/>
    <property type="evidence" value="ECO:0007669"/>
    <property type="project" value="UniProtKB-UniRule"/>
</dbReference>
<dbReference type="GO" id="GO:0006425">
    <property type="term" value="P:glutaminyl-tRNA aminoacylation"/>
    <property type="evidence" value="ECO:0007669"/>
    <property type="project" value="InterPro"/>
</dbReference>
<dbReference type="GO" id="GO:0006424">
    <property type="term" value="P:glutamyl-tRNA aminoacylation"/>
    <property type="evidence" value="ECO:0007669"/>
    <property type="project" value="UniProtKB-UniRule"/>
</dbReference>
<dbReference type="CDD" id="cd00807">
    <property type="entry name" value="GlnRS_core"/>
    <property type="match status" value="1"/>
</dbReference>
<dbReference type="FunFam" id="1.10.1160.10:FF:000001">
    <property type="entry name" value="Glutamine--tRNA ligase"/>
    <property type="match status" value="1"/>
</dbReference>
<dbReference type="FunFam" id="2.40.240.10:FF:000001">
    <property type="entry name" value="Glutamine--tRNA ligase"/>
    <property type="match status" value="1"/>
</dbReference>
<dbReference type="FunFam" id="2.40.240.10:FF:000003">
    <property type="entry name" value="Glutamine--tRNA ligase"/>
    <property type="match status" value="1"/>
</dbReference>
<dbReference type="FunFam" id="3.90.800.10:FF:000001">
    <property type="entry name" value="Glutamine--tRNA ligase"/>
    <property type="match status" value="1"/>
</dbReference>
<dbReference type="FunFam" id="3.40.50.620:FF:000037">
    <property type="entry name" value="Glutamine--tRNA ligase cytoplasmic"/>
    <property type="match status" value="1"/>
</dbReference>
<dbReference type="Gene3D" id="1.10.1160.10">
    <property type="entry name" value="Glutamyl-trna Synthetase, Domain 2"/>
    <property type="match status" value="1"/>
</dbReference>
<dbReference type="Gene3D" id="3.90.800.10">
    <property type="entry name" value="Glutamyl-tRNA Synthetase, Domain 3"/>
    <property type="match status" value="1"/>
</dbReference>
<dbReference type="Gene3D" id="3.40.50.620">
    <property type="entry name" value="HUPs"/>
    <property type="match status" value="1"/>
</dbReference>
<dbReference type="Gene3D" id="2.40.240.10">
    <property type="entry name" value="Ribosomal Protein L25, Chain P"/>
    <property type="match status" value="2"/>
</dbReference>
<dbReference type="HAMAP" id="MF_00126">
    <property type="entry name" value="Gln_tRNA_synth"/>
    <property type="match status" value="1"/>
</dbReference>
<dbReference type="InterPro" id="IPR001412">
    <property type="entry name" value="aa-tRNA-synth_I_CS"/>
</dbReference>
<dbReference type="InterPro" id="IPR004514">
    <property type="entry name" value="Gln-tRNA-synth"/>
</dbReference>
<dbReference type="InterPro" id="IPR050132">
    <property type="entry name" value="Gln/Glu-tRNA_Ligase"/>
</dbReference>
<dbReference type="InterPro" id="IPR022861">
    <property type="entry name" value="Gln_tRNA_ligase_bac"/>
</dbReference>
<dbReference type="InterPro" id="IPR000924">
    <property type="entry name" value="Glu/Gln-tRNA-synth"/>
</dbReference>
<dbReference type="InterPro" id="IPR020058">
    <property type="entry name" value="Glu/Gln-tRNA-synth_Ib_cat-dom"/>
</dbReference>
<dbReference type="InterPro" id="IPR020059">
    <property type="entry name" value="Glu/Gln-tRNA-synth_Ib_codon-bd"/>
</dbReference>
<dbReference type="InterPro" id="IPR020061">
    <property type="entry name" value="Glu_tRNA_lig_a-bdl"/>
</dbReference>
<dbReference type="InterPro" id="IPR020056">
    <property type="entry name" value="Rbsml_bL25/Gln-tRNA_synth_N"/>
</dbReference>
<dbReference type="InterPro" id="IPR011035">
    <property type="entry name" value="Ribosomal_bL25/Gln-tRNA_synth"/>
</dbReference>
<dbReference type="InterPro" id="IPR014729">
    <property type="entry name" value="Rossmann-like_a/b/a_fold"/>
</dbReference>
<dbReference type="InterPro" id="IPR049437">
    <property type="entry name" value="tRNA-synt_1c_C2"/>
</dbReference>
<dbReference type="NCBIfam" id="TIGR00440">
    <property type="entry name" value="glnS"/>
    <property type="match status" value="1"/>
</dbReference>
<dbReference type="NCBIfam" id="NF011291">
    <property type="entry name" value="PRK14703.1"/>
    <property type="match status" value="1"/>
</dbReference>
<dbReference type="PANTHER" id="PTHR43097:SF5">
    <property type="entry name" value="GLUTAMATE--TRNA LIGASE"/>
    <property type="match status" value="1"/>
</dbReference>
<dbReference type="PANTHER" id="PTHR43097">
    <property type="entry name" value="GLUTAMINE-TRNA LIGASE"/>
    <property type="match status" value="1"/>
</dbReference>
<dbReference type="Pfam" id="PF00749">
    <property type="entry name" value="tRNA-synt_1c"/>
    <property type="match status" value="1"/>
</dbReference>
<dbReference type="Pfam" id="PF03950">
    <property type="entry name" value="tRNA-synt_1c_C"/>
    <property type="match status" value="1"/>
</dbReference>
<dbReference type="Pfam" id="PF20974">
    <property type="entry name" value="tRNA-synt_1c_C2"/>
    <property type="match status" value="1"/>
</dbReference>
<dbReference type="PRINTS" id="PR00987">
    <property type="entry name" value="TRNASYNTHGLU"/>
</dbReference>
<dbReference type="SUPFAM" id="SSF52374">
    <property type="entry name" value="Nucleotidylyl transferase"/>
    <property type="match status" value="1"/>
</dbReference>
<dbReference type="SUPFAM" id="SSF50715">
    <property type="entry name" value="Ribosomal protein L25-like"/>
    <property type="match status" value="1"/>
</dbReference>
<dbReference type="PROSITE" id="PS00178">
    <property type="entry name" value="AA_TRNA_LIGASE_I"/>
    <property type="match status" value="1"/>
</dbReference>
<name>SYQ_SERP5</name>
<reference key="1">
    <citation type="submission" date="2007-09" db="EMBL/GenBank/DDBJ databases">
        <title>Complete sequence of chromosome of Serratia proteamaculans 568.</title>
        <authorList>
            <consortium name="US DOE Joint Genome Institute"/>
            <person name="Copeland A."/>
            <person name="Lucas S."/>
            <person name="Lapidus A."/>
            <person name="Barry K."/>
            <person name="Glavina del Rio T."/>
            <person name="Dalin E."/>
            <person name="Tice H."/>
            <person name="Pitluck S."/>
            <person name="Chain P."/>
            <person name="Malfatti S."/>
            <person name="Shin M."/>
            <person name="Vergez L."/>
            <person name="Schmutz J."/>
            <person name="Larimer F."/>
            <person name="Land M."/>
            <person name="Hauser L."/>
            <person name="Kyrpides N."/>
            <person name="Kim E."/>
            <person name="Taghavi S."/>
            <person name="Newman L."/>
            <person name="Vangronsveld J."/>
            <person name="van der Lelie D."/>
            <person name="Richardson P."/>
        </authorList>
    </citation>
    <scope>NUCLEOTIDE SEQUENCE [LARGE SCALE GENOMIC DNA]</scope>
    <source>
        <strain>568</strain>
    </source>
</reference>
<gene>
    <name evidence="1" type="primary">glnS</name>
    <name type="ordered locus">Spro_1229</name>
</gene>
<feature type="chain" id="PRO_1000057821" description="Glutamine--tRNA ligase">
    <location>
        <begin position="1"/>
        <end position="554"/>
    </location>
</feature>
<feature type="short sequence motif" description="'HIGH' region" evidence="1">
    <location>
        <begin position="34"/>
        <end position="44"/>
    </location>
</feature>
<feature type="short sequence motif" description="'KMSKS' region" evidence="1">
    <location>
        <begin position="268"/>
        <end position="272"/>
    </location>
</feature>
<feature type="binding site" evidence="1">
    <location>
        <begin position="35"/>
        <end position="37"/>
    </location>
    <ligand>
        <name>ATP</name>
        <dbReference type="ChEBI" id="CHEBI:30616"/>
    </ligand>
</feature>
<feature type="binding site" evidence="1">
    <location>
        <begin position="41"/>
        <end position="47"/>
    </location>
    <ligand>
        <name>ATP</name>
        <dbReference type="ChEBI" id="CHEBI:30616"/>
    </ligand>
</feature>
<feature type="binding site" evidence="1">
    <location>
        <position position="67"/>
    </location>
    <ligand>
        <name>L-glutamine</name>
        <dbReference type="ChEBI" id="CHEBI:58359"/>
    </ligand>
</feature>
<feature type="binding site" evidence="1">
    <location>
        <position position="212"/>
    </location>
    <ligand>
        <name>L-glutamine</name>
        <dbReference type="ChEBI" id="CHEBI:58359"/>
    </ligand>
</feature>
<feature type="binding site" evidence="1">
    <location>
        <position position="231"/>
    </location>
    <ligand>
        <name>ATP</name>
        <dbReference type="ChEBI" id="CHEBI:30616"/>
    </ligand>
</feature>
<feature type="binding site" evidence="1">
    <location>
        <begin position="261"/>
        <end position="262"/>
    </location>
    <ligand>
        <name>ATP</name>
        <dbReference type="ChEBI" id="CHEBI:30616"/>
    </ligand>
</feature>
<feature type="binding site" evidence="1">
    <location>
        <begin position="269"/>
        <end position="271"/>
    </location>
    <ligand>
        <name>ATP</name>
        <dbReference type="ChEBI" id="CHEBI:30616"/>
    </ligand>
</feature>
<proteinExistence type="inferred from homology"/>
<evidence type="ECO:0000255" key="1">
    <source>
        <dbReference type="HAMAP-Rule" id="MF_00126"/>
    </source>
</evidence>
<accession>A8GB43</accession>
<protein>
    <recommendedName>
        <fullName evidence="1">Glutamine--tRNA ligase</fullName>
        <ecNumber evidence="1">6.1.1.18</ecNumber>
    </recommendedName>
    <alternativeName>
        <fullName evidence="1">Glutaminyl-tRNA synthetase</fullName>
        <shortName evidence="1">GlnRS</shortName>
    </alternativeName>
</protein>
<keyword id="KW-0030">Aminoacyl-tRNA synthetase</keyword>
<keyword id="KW-0067">ATP-binding</keyword>
<keyword id="KW-0963">Cytoplasm</keyword>
<keyword id="KW-0436">Ligase</keyword>
<keyword id="KW-0547">Nucleotide-binding</keyword>
<keyword id="KW-0648">Protein biosynthesis</keyword>
<comment type="catalytic activity">
    <reaction evidence="1">
        <text>tRNA(Gln) + L-glutamine + ATP = L-glutaminyl-tRNA(Gln) + AMP + diphosphate</text>
        <dbReference type="Rhea" id="RHEA:20121"/>
        <dbReference type="Rhea" id="RHEA-COMP:9662"/>
        <dbReference type="Rhea" id="RHEA-COMP:9681"/>
        <dbReference type="ChEBI" id="CHEBI:30616"/>
        <dbReference type="ChEBI" id="CHEBI:33019"/>
        <dbReference type="ChEBI" id="CHEBI:58359"/>
        <dbReference type="ChEBI" id="CHEBI:78442"/>
        <dbReference type="ChEBI" id="CHEBI:78521"/>
        <dbReference type="ChEBI" id="CHEBI:456215"/>
        <dbReference type="EC" id="6.1.1.18"/>
    </reaction>
</comment>
<comment type="subunit">
    <text evidence="1">Monomer.</text>
</comment>
<comment type="subcellular location">
    <subcellularLocation>
        <location evidence="1">Cytoplasm</location>
    </subcellularLocation>
</comment>
<comment type="similarity">
    <text evidence="1">Belongs to the class-I aminoacyl-tRNA synthetase family.</text>
</comment>
<sequence length="554" mass="63507">MSEAEARPTNFIRQIVDEDLASGKHKSVHTRFPPEPNGYLHIGHAKSICLNFGIARDYQGQCNLRFDDTNPVKEDIEFVESIKHDVEWLGFEWSGNVRYSSDYFDQLHNYAVELINKGLAYVDELSPEQIREYRGSLTAPGKDSPYRGRSVEENLALFEKMRNGEFAEGTACLRAKIDMASSFIVMRDPVLYRIKFAEHHQTGNKWCIYPMYDFTHCISDALEGITHSLCTLEFQDNRRLYDWVLDNITIPCHPRQYEFSRLNLEYAIMSKRKLNLLVTEKIVEGWDDPRMPTVSGLRRRGYTAASIREFCQRIGVTKQDNNVEMMALEACIREELNENAPRAMAVLDPVKVVIENLTTGVEMVTMPNHPSKPEMGSREVPFSRDIYIDRADFREEANKQYKRLVLGKEVRLRNAYVIKAERIEKDAEGEITTIFCSYDPDTLSKDPADGRKVKGVIHWVSAEHALPAEIRVYDRLFSVPNPAAAEDFLTTINPESLVIKHGFVEPSLAAAQPEKAYQFEREGYFCADNRHSSAEHLVFNRTVGLRDTWAKIGA</sequence>